<accession>P25689</accession>
<accession>Q7JJX1</accession>
<dbReference type="EC" id="1.7.3.3"/>
<dbReference type="EMBL" id="M27694">
    <property type="protein sequence ID" value="AAA35395.1"/>
    <property type="molecule type" value="mRNA"/>
</dbReference>
<dbReference type="EMBL" id="AB074366">
    <property type="protein sequence ID" value="BAB91554.1"/>
    <property type="molecule type" value="Genomic_DNA"/>
</dbReference>
<dbReference type="SMR" id="P25689"/>
<dbReference type="UniPathway" id="UPA00394">
    <property type="reaction ID" value="UER00650"/>
</dbReference>
<dbReference type="GO" id="GO:0005777">
    <property type="term" value="C:peroxisome"/>
    <property type="evidence" value="ECO:0007669"/>
    <property type="project" value="UniProtKB-SubCell"/>
</dbReference>
<dbReference type="GO" id="GO:0004846">
    <property type="term" value="F:urate oxidase activity"/>
    <property type="evidence" value="ECO:0007669"/>
    <property type="project" value="UniProtKB-EC"/>
</dbReference>
<dbReference type="GO" id="GO:0006145">
    <property type="term" value="P:purine nucleobase catabolic process"/>
    <property type="evidence" value="ECO:0007669"/>
    <property type="project" value="TreeGrafter"/>
</dbReference>
<dbReference type="GO" id="GO:0019628">
    <property type="term" value="P:urate catabolic process"/>
    <property type="evidence" value="ECO:0007669"/>
    <property type="project" value="UniProtKB-UniPathway"/>
</dbReference>
<dbReference type="CDD" id="cd00445">
    <property type="entry name" value="Uricase"/>
    <property type="match status" value="1"/>
</dbReference>
<dbReference type="FunFam" id="3.10.270.10:FF:000001">
    <property type="entry name" value="Uricase"/>
    <property type="match status" value="1"/>
</dbReference>
<dbReference type="Gene3D" id="3.10.270.10">
    <property type="entry name" value="Urate Oxidase"/>
    <property type="match status" value="1"/>
</dbReference>
<dbReference type="InterPro" id="IPR002042">
    <property type="entry name" value="Uricase"/>
</dbReference>
<dbReference type="InterPro" id="IPR019842">
    <property type="entry name" value="Uricase_CS"/>
</dbReference>
<dbReference type="NCBIfam" id="TIGR03383">
    <property type="entry name" value="urate_oxi"/>
    <property type="match status" value="1"/>
</dbReference>
<dbReference type="PANTHER" id="PTHR42874">
    <property type="entry name" value="URICASE"/>
    <property type="match status" value="1"/>
</dbReference>
<dbReference type="PANTHER" id="PTHR42874:SF1">
    <property type="entry name" value="URICASE"/>
    <property type="match status" value="1"/>
</dbReference>
<dbReference type="Pfam" id="PF01014">
    <property type="entry name" value="Uricase"/>
    <property type="match status" value="2"/>
</dbReference>
<dbReference type="PIRSF" id="PIRSF000241">
    <property type="entry name" value="Urate_oxidase"/>
    <property type="match status" value="1"/>
</dbReference>
<dbReference type="PRINTS" id="PR00093">
    <property type="entry name" value="URICASE"/>
</dbReference>
<dbReference type="SUPFAM" id="SSF55620">
    <property type="entry name" value="Tetrahydrobiopterin biosynthesis enzymes-like"/>
    <property type="match status" value="2"/>
</dbReference>
<dbReference type="PROSITE" id="PS00366">
    <property type="entry name" value="URICASE"/>
    <property type="match status" value="1"/>
</dbReference>
<name>URIC_PAPHA</name>
<comment type="function">
    <text>Catalyzes the oxidation of uric acid to 5-hydroxyisourate, which is further processed to form (S)-allantoin.</text>
</comment>
<comment type="catalytic activity">
    <reaction>
        <text>urate + O2 + H2O = 5-hydroxyisourate + H2O2</text>
        <dbReference type="Rhea" id="RHEA:21368"/>
        <dbReference type="ChEBI" id="CHEBI:15377"/>
        <dbReference type="ChEBI" id="CHEBI:15379"/>
        <dbReference type="ChEBI" id="CHEBI:16240"/>
        <dbReference type="ChEBI" id="CHEBI:17775"/>
        <dbReference type="ChEBI" id="CHEBI:18072"/>
        <dbReference type="EC" id="1.7.3.3"/>
    </reaction>
</comment>
<comment type="pathway">
    <text>Purine metabolism; urate degradation; (S)-allantoin from urate: step 1/3.</text>
</comment>
<comment type="subcellular location">
    <subcellularLocation>
        <location>Peroxisome</location>
    </subcellularLocation>
</comment>
<comment type="similarity">
    <text evidence="5">Belongs to the uricase family.</text>
</comment>
<proteinExistence type="evidence at transcript level"/>
<protein>
    <recommendedName>
        <fullName>Uricase</fullName>
        <ecNumber>1.7.3.3</ecNumber>
    </recommendedName>
    <alternativeName>
        <fullName>Urate oxidase</fullName>
    </alternativeName>
</protein>
<evidence type="ECO:0000250" key="1">
    <source>
        <dbReference type="UniProtKB" id="D0VWQ1"/>
    </source>
</evidence>
<evidence type="ECO:0000250" key="2">
    <source>
        <dbReference type="UniProtKB" id="P25688"/>
    </source>
</evidence>
<evidence type="ECO:0000250" key="3">
    <source>
        <dbReference type="UniProtKB" id="Q00511"/>
    </source>
</evidence>
<evidence type="ECO:0000255" key="4"/>
<evidence type="ECO:0000305" key="5"/>
<feature type="initiator methionine" description="Removed" evidence="2">
    <location>
        <position position="1"/>
    </location>
</feature>
<feature type="chain" id="PRO_0000165987" description="Uricase">
    <location>
        <begin position="2"/>
        <end position="304"/>
    </location>
</feature>
<feature type="short sequence motif" description="Microbody targeting signal" evidence="4">
    <location>
        <begin position="302"/>
        <end position="304"/>
    </location>
</feature>
<feature type="active site" description="Charge relay system" evidence="1">
    <location>
        <position position="23"/>
    </location>
</feature>
<feature type="active site" description="Charge relay system" evidence="1">
    <location>
        <position position="68"/>
    </location>
</feature>
<feature type="active site" description="Charge relay system" evidence="1">
    <location>
        <position position="264"/>
    </location>
</feature>
<feature type="binding site" evidence="3">
    <location>
        <position position="68"/>
    </location>
    <ligand>
        <name>urate</name>
        <dbReference type="ChEBI" id="CHEBI:17775"/>
    </ligand>
</feature>
<feature type="binding site" evidence="3">
    <location>
        <position position="69"/>
    </location>
    <ligand>
        <name>urate</name>
        <dbReference type="ChEBI" id="CHEBI:17775"/>
    </ligand>
</feature>
<feature type="binding site" evidence="3">
    <location>
        <position position="170"/>
    </location>
    <ligand>
        <name>urate</name>
        <dbReference type="ChEBI" id="CHEBI:17775"/>
    </ligand>
</feature>
<feature type="binding site" evidence="3">
    <location>
        <position position="187"/>
    </location>
    <ligand>
        <name>urate</name>
        <dbReference type="ChEBI" id="CHEBI:17775"/>
    </ligand>
</feature>
<feature type="binding site" evidence="3">
    <location>
        <position position="235"/>
    </location>
    <ligand>
        <name>urate</name>
        <dbReference type="ChEBI" id="CHEBI:17775"/>
    </ligand>
</feature>
<feature type="binding site" evidence="3">
    <location>
        <position position="236"/>
    </location>
    <ligand>
        <name>urate</name>
        <dbReference type="ChEBI" id="CHEBI:17775"/>
    </ligand>
</feature>
<feature type="binding site" evidence="3">
    <location>
        <position position="262"/>
    </location>
    <ligand>
        <name>urate</name>
        <dbReference type="ChEBI" id="CHEBI:17775"/>
    </ligand>
</feature>
<feature type="modified residue" description="N-acetylalanine" evidence="2">
    <location>
        <position position="2"/>
    </location>
</feature>
<feature type="modified residue" description="N6-acetyllysine; alternate" evidence="2">
    <location>
        <position position="10"/>
    </location>
</feature>
<feature type="modified residue" description="N6-succinyllysine; alternate" evidence="2">
    <location>
        <position position="10"/>
    </location>
</feature>
<feature type="modified residue" description="N6-acetyllysine; alternate" evidence="2">
    <location>
        <position position="23"/>
    </location>
</feature>
<feature type="modified residue" description="N6-succinyllysine; alternate" evidence="2">
    <location>
        <position position="23"/>
    </location>
</feature>
<feature type="modified residue" description="N6-acetyllysine" evidence="2">
    <location>
        <position position="27"/>
    </location>
</feature>
<feature type="modified residue" description="N6-acetyllysine" evidence="2">
    <location>
        <position position="36"/>
    </location>
</feature>
<feature type="modified residue" description="Phosphoserine" evidence="2">
    <location>
        <position position="39"/>
    </location>
</feature>
<feature type="modified residue" description="Phosphoserine" evidence="2">
    <location>
        <position position="63"/>
    </location>
</feature>
<feature type="modified residue" description="N6-acetyllysine" evidence="2">
    <location>
        <position position="118"/>
    </location>
</feature>
<feature type="modified residue" description="N6-acetyllysine" evidence="2">
    <location>
        <position position="122"/>
    </location>
</feature>
<feature type="modified residue" description="N6-acetyllysine" evidence="2">
    <location>
        <position position="164"/>
    </location>
</feature>
<feature type="modified residue" description="N6-acetyllysine" evidence="2">
    <location>
        <position position="175"/>
    </location>
</feature>
<feature type="modified residue" description="N6-acetyllysine" evidence="2">
    <location>
        <position position="185"/>
    </location>
</feature>
<feature type="modified residue" description="N6-acetyllysine; alternate" evidence="2">
    <location>
        <position position="221"/>
    </location>
</feature>
<feature type="modified residue" description="N6-succinyllysine; alternate" evidence="2">
    <location>
        <position position="221"/>
    </location>
</feature>
<feature type="modified residue" description="N6-acetyllysine; alternate" evidence="2">
    <location>
        <position position="228"/>
    </location>
</feature>
<feature type="modified residue" description="N6-succinyllysine; alternate" evidence="2">
    <location>
        <position position="228"/>
    </location>
</feature>
<feature type="modified residue" description="Phosphoserine" evidence="2">
    <location>
        <position position="232"/>
    </location>
</feature>
<feature type="modified residue" description="N6-acetyllysine" evidence="2">
    <location>
        <position position="278"/>
    </location>
</feature>
<feature type="modified residue" description="Phosphotyrosine" evidence="2">
    <location>
        <position position="289"/>
    </location>
</feature>
<feature type="sequence conflict" description="In Ref. 1; AAA35395." evidence="5" ref="1">
    <original>H</original>
    <variation>T</variation>
    <location>
        <position position="154"/>
    </location>
</feature>
<organism>
    <name type="scientific">Papio hamadryas</name>
    <name type="common">Hamadryas baboon</name>
    <dbReference type="NCBI Taxonomy" id="9557"/>
    <lineage>
        <taxon>Eukaryota</taxon>
        <taxon>Metazoa</taxon>
        <taxon>Chordata</taxon>
        <taxon>Craniata</taxon>
        <taxon>Vertebrata</taxon>
        <taxon>Euteleostomi</taxon>
        <taxon>Mammalia</taxon>
        <taxon>Eutheria</taxon>
        <taxon>Euarchontoglires</taxon>
        <taxon>Primates</taxon>
        <taxon>Haplorrhini</taxon>
        <taxon>Catarrhini</taxon>
        <taxon>Cercopithecidae</taxon>
        <taxon>Cercopithecinae</taxon>
        <taxon>Papio</taxon>
    </lineage>
</organism>
<gene>
    <name type="primary">UOX</name>
</gene>
<keyword id="KW-0007">Acetylation</keyword>
<keyword id="KW-0560">Oxidoreductase</keyword>
<keyword id="KW-0576">Peroxisome</keyword>
<keyword id="KW-0597">Phosphoprotein</keyword>
<keyword id="KW-0659">Purine metabolism</keyword>
<sequence length="304" mass="34978">MADYHNNYKKNDELEFVRTGYGKDMVKVLHIQRDGKYHSIKEVATSVQLTLSSKKDYLHGDNSDIIPTDTIKNTVHVLAKFKGIKSIEAFGVNICEYFLSSFNHVIRAQVYVEEIPWKRLEKNGVKHVHAFIHTPTGTHFCEVEQLRSGPPVIHSGIKDLKVLKTTQSGFEGFIKDQFTTLPEVKDRCFATQVYCKWRYHQCRDVDFEATWGTIRDLVLEKFAGPYDKGEYSPSVQKTLYDIQVLSLSRVPEIEDMEISLPNIHYFNIDMSKMGLINKEEVLLPLDNPYGKITGTVKRKLSSRL</sequence>
<reference key="1">
    <citation type="journal article" date="1989" name="Proc. Natl. Acad. Sci. U.S.A.">
        <title>Urate oxidase: primary structure and evolutionary implications.</title>
        <authorList>
            <person name="Wu X."/>
            <person name="Lee C.C."/>
            <person name="Muzny D.M."/>
            <person name="Caskey C.T."/>
        </authorList>
    </citation>
    <scope>NUCLEOTIDE SEQUENCE [MRNA]</scope>
</reference>
<reference key="2">
    <citation type="journal article" date="2002" name="Mol. Biol. Evol.">
        <title>Loss of urate oxidase activity in hominoids and its evolutionary implications.</title>
        <authorList>
            <person name="Oda M."/>
            <person name="Satta Y."/>
            <person name="Takenaka O."/>
            <person name="Takahata N."/>
        </authorList>
    </citation>
    <scope>NUCLEOTIDE SEQUENCE [GENOMIC DNA]</scope>
</reference>